<gene>
    <name type="primary">AIM14</name>
    <name type="ordered locus">DEHA2F09240g</name>
</gene>
<accession>Q6BM09</accession>
<name>AIM14_DEBHA</name>
<feature type="chain" id="PRO_0000408744" description="Probable metalloreductase AIM14">
    <location>
        <begin position="1"/>
        <end position="512"/>
    </location>
</feature>
<feature type="transmembrane region" description="Helical" evidence="2">
    <location>
        <begin position="20"/>
        <end position="40"/>
    </location>
</feature>
<feature type="transmembrane region" description="Helical" evidence="2">
    <location>
        <begin position="61"/>
        <end position="81"/>
    </location>
</feature>
<feature type="transmembrane region" description="Helical" evidence="2">
    <location>
        <begin position="97"/>
        <end position="117"/>
    </location>
</feature>
<feature type="transmembrane region" description="Helical" evidence="2">
    <location>
        <begin position="132"/>
        <end position="152"/>
    </location>
</feature>
<feature type="transmembrane region" description="Helical" evidence="2">
    <location>
        <begin position="161"/>
        <end position="181"/>
    </location>
</feature>
<feature type="transmembrane region" description="Helical" evidence="2">
    <location>
        <begin position="191"/>
        <end position="211"/>
    </location>
</feature>
<feature type="transmembrane region" description="Helical" evidence="2">
    <location>
        <begin position="218"/>
        <end position="235"/>
    </location>
</feature>
<feature type="domain" description="Ferric oxidoreductase">
    <location>
        <begin position="94"/>
        <end position="206"/>
    </location>
</feature>
<feature type="domain" description="FAD-binding FR-type" evidence="3">
    <location>
        <begin position="230"/>
        <end position="355"/>
    </location>
</feature>
<feature type="region of interest" description="Disordered" evidence="4">
    <location>
        <begin position="427"/>
        <end position="451"/>
    </location>
</feature>
<feature type="compositionally biased region" description="Low complexity" evidence="4">
    <location>
        <begin position="427"/>
        <end position="436"/>
    </location>
</feature>
<feature type="compositionally biased region" description="Polar residues" evidence="4">
    <location>
        <begin position="437"/>
        <end position="447"/>
    </location>
</feature>
<reference key="1">
    <citation type="journal article" date="2004" name="Nature">
        <title>Genome evolution in yeasts.</title>
        <authorList>
            <person name="Dujon B."/>
            <person name="Sherman D."/>
            <person name="Fischer G."/>
            <person name="Durrens P."/>
            <person name="Casaregola S."/>
            <person name="Lafontaine I."/>
            <person name="de Montigny J."/>
            <person name="Marck C."/>
            <person name="Neuveglise C."/>
            <person name="Talla E."/>
            <person name="Goffard N."/>
            <person name="Frangeul L."/>
            <person name="Aigle M."/>
            <person name="Anthouard V."/>
            <person name="Babour A."/>
            <person name="Barbe V."/>
            <person name="Barnay S."/>
            <person name="Blanchin S."/>
            <person name="Beckerich J.-M."/>
            <person name="Beyne E."/>
            <person name="Bleykasten C."/>
            <person name="Boisrame A."/>
            <person name="Boyer J."/>
            <person name="Cattolico L."/>
            <person name="Confanioleri F."/>
            <person name="de Daruvar A."/>
            <person name="Despons L."/>
            <person name="Fabre E."/>
            <person name="Fairhead C."/>
            <person name="Ferry-Dumazet H."/>
            <person name="Groppi A."/>
            <person name="Hantraye F."/>
            <person name="Hennequin C."/>
            <person name="Jauniaux N."/>
            <person name="Joyet P."/>
            <person name="Kachouri R."/>
            <person name="Kerrest A."/>
            <person name="Koszul R."/>
            <person name="Lemaire M."/>
            <person name="Lesur I."/>
            <person name="Ma L."/>
            <person name="Muller H."/>
            <person name="Nicaud J.-M."/>
            <person name="Nikolski M."/>
            <person name="Oztas S."/>
            <person name="Ozier-Kalogeropoulos O."/>
            <person name="Pellenz S."/>
            <person name="Potier S."/>
            <person name="Richard G.-F."/>
            <person name="Straub M.-L."/>
            <person name="Suleau A."/>
            <person name="Swennen D."/>
            <person name="Tekaia F."/>
            <person name="Wesolowski-Louvel M."/>
            <person name="Westhof E."/>
            <person name="Wirth B."/>
            <person name="Zeniou-Meyer M."/>
            <person name="Zivanovic Y."/>
            <person name="Bolotin-Fukuhara M."/>
            <person name="Thierry A."/>
            <person name="Bouchier C."/>
            <person name="Caudron B."/>
            <person name="Scarpelli C."/>
            <person name="Gaillardin C."/>
            <person name="Weissenbach J."/>
            <person name="Wincker P."/>
            <person name="Souciet J.-L."/>
        </authorList>
    </citation>
    <scope>NUCLEOTIDE SEQUENCE [LARGE SCALE GENOMIC DNA]</scope>
    <source>
        <strain>ATCC 36239 / CBS 767 / BCRC 21394 / JCM 1990 / NBRC 0083 / IGC 2968</strain>
    </source>
</reference>
<evidence type="ECO:0000250" key="1"/>
<evidence type="ECO:0000255" key="2"/>
<evidence type="ECO:0000255" key="3">
    <source>
        <dbReference type="PROSITE-ProRule" id="PRU00716"/>
    </source>
</evidence>
<evidence type="ECO:0000256" key="4">
    <source>
        <dbReference type="SAM" id="MobiDB-lite"/>
    </source>
</evidence>
<evidence type="ECO:0000305" key="5"/>
<proteinExistence type="inferred from homology"/>
<dbReference type="EC" id="1.16.1.-"/>
<dbReference type="EMBL" id="CR382138">
    <property type="protein sequence ID" value="CAG89103.2"/>
    <property type="molecule type" value="Genomic_DNA"/>
</dbReference>
<dbReference type="RefSeq" id="XP_460762.2">
    <property type="nucleotide sequence ID" value="XM_460762.1"/>
</dbReference>
<dbReference type="SMR" id="Q6BM09"/>
<dbReference type="FunCoup" id="Q6BM09">
    <property type="interactions" value="28"/>
</dbReference>
<dbReference type="GeneID" id="2903598"/>
<dbReference type="KEGG" id="dha:DEHA2F09240g"/>
<dbReference type="VEuPathDB" id="FungiDB:DEHA2F09240g"/>
<dbReference type="eggNOG" id="KOG0039">
    <property type="taxonomic scope" value="Eukaryota"/>
</dbReference>
<dbReference type="HOGENOM" id="CLU_036508_0_0_1"/>
<dbReference type="InParanoid" id="Q6BM09"/>
<dbReference type="OMA" id="GRMAYCL"/>
<dbReference type="OrthoDB" id="17725at2759"/>
<dbReference type="Proteomes" id="UP000000599">
    <property type="component" value="Chromosome F"/>
</dbReference>
<dbReference type="GO" id="GO:0097038">
    <property type="term" value="C:perinuclear endoplasmic reticulum"/>
    <property type="evidence" value="ECO:0007669"/>
    <property type="project" value="EnsemblFungi"/>
</dbReference>
<dbReference type="GO" id="GO:0005886">
    <property type="term" value="C:plasma membrane"/>
    <property type="evidence" value="ECO:0007669"/>
    <property type="project" value="TreeGrafter"/>
</dbReference>
<dbReference type="GO" id="GO:0000293">
    <property type="term" value="F:ferric-chelate reductase activity"/>
    <property type="evidence" value="ECO:0007669"/>
    <property type="project" value="TreeGrafter"/>
</dbReference>
<dbReference type="GO" id="GO:0016175">
    <property type="term" value="F:superoxide-generating NAD(P)H oxidase activity"/>
    <property type="evidence" value="ECO:0007669"/>
    <property type="project" value="EnsemblFungi"/>
</dbReference>
<dbReference type="GO" id="GO:0006915">
    <property type="term" value="P:apoptotic process"/>
    <property type="evidence" value="ECO:0007669"/>
    <property type="project" value="EnsemblFungi"/>
</dbReference>
<dbReference type="GO" id="GO:0033215">
    <property type="term" value="P:reductive iron assimilation"/>
    <property type="evidence" value="ECO:0007669"/>
    <property type="project" value="TreeGrafter"/>
</dbReference>
<dbReference type="GO" id="GO:0032956">
    <property type="term" value="P:regulation of actin cytoskeleton organization"/>
    <property type="evidence" value="ECO:0007669"/>
    <property type="project" value="EnsemblFungi"/>
</dbReference>
<dbReference type="CDD" id="cd06186">
    <property type="entry name" value="NOX_Duox_like_FAD_NADP"/>
    <property type="match status" value="1"/>
</dbReference>
<dbReference type="Gene3D" id="3.40.50.80">
    <property type="entry name" value="Nucleotide-binding domain of ferredoxin-NADP reductase (FNR) module"/>
    <property type="match status" value="1"/>
</dbReference>
<dbReference type="InterPro" id="IPR013112">
    <property type="entry name" value="FAD-bd_8"/>
</dbReference>
<dbReference type="InterPro" id="IPR017927">
    <property type="entry name" value="FAD-bd_FR_type"/>
</dbReference>
<dbReference type="InterPro" id="IPR013130">
    <property type="entry name" value="Fe3_Rdtase_TM_dom"/>
</dbReference>
<dbReference type="InterPro" id="IPR013121">
    <property type="entry name" value="Fe_red_NAD-bd_6"/>
</dbReference>
<dbReference type="InterPro" id="IPR039261">
    <property type="entry name" value="FNR_nucleotide-bd"/>
</dbReference>
<dbReference type="InterPro" id="IPR050369">
    <property type="entry name" value="RBOH/FRE"/>
</dbReference>
<dbReference type="PANTHER" id="PTHR11972:SF198">
    <property type="entry name" value="METALLOREDUCTASE AIM14-RELATED"/>
    <property type="match status" value="1"/>
</dbReference>
<dbReference type="PANTHER" id="PTHR11972">
    <property type="entry name" value="NADPH OXIDASE"/>
    <property type="match status" value="1"/>
</dbReference>
<dbReference type="Pfam" id="PF08022">
    <property type="entry name" value="FAD_binding_8"/>
    <property type="match status" value="1"/>
</dbReference>
<dbReference type="Pfam" id="PF01794">
    <property type="entry name" value="Ferric_reduct"/>
    <property type="match status" value="1"/>
</dbReference>
<dbReference type="Pfam" id="PF08030">
    <property type="entry name" value="NAD_binding_6"/>
    <property type="match status" value="1"/>
</dbReference>
<dbReference type="SFLD" id="SFLDF00463">
    <property type="entry name" value="AIM14"/>
    <property type="match status" value="1"/>
</dbReference>
<dbReference type="SFLD" id="SFLDS00052">
    <property type="entry name" value="Ferric_Reductase_Domain"/>
    <property type="match status" value="1"/>
</dbReference>
<dbReference type="SFLD" id="SFLDG01168">
    <property type="entry name" value="Ferric_reductase_subgroup_(FRE"/>
    <property type="match status" value="1"/>
</dbReference>
<dbReference type="SUPFAM" id="SSF52343">
    <property type="entry name" value="Ferredoxin reductase-like, C-terminal NADP-linked domain"/>
    <property type="match status" value="1"/>
</dbReference>
<dbReference type="PROSITE" id="PS51384">
    <property type="entry name" value="FAD_FR"/>
    <property type="match status" value="1"/>
</dbReference>
<keyword id="KW-0249">Electron transport</keyword>
<keyword id="KW-0274">FAD</keyword>
<keyword id="KW-0285">Flavoprotein</keyword>
<keyword id="KW-0406">Ion transport</keyword>
<keyword id="KW-0472">Membrane</keyword>
<keyword id="KW-0521">NADP</keyword>
<keyword id="KW-0560">Oxidoreductase</keyword>
<keyword id="KW-1185">Reference proteome</keyword>
<keyword id="KW-0812">Transmembrane</keyword>
<keyword id="KW-1133">Transmembrane helix</keyword>
<keyword id="KW-0813">Transport</keyword>
<protein>
    <recommendedName>
        <fullName>Probable metalloreductase AIM14</fullName>
        <ecNumber>1.16.1.-</ecNumber>
    </recommendedName>
</protein>
<comment type="function">
    <text evidence="1">Probable cell surface metalloreductase. May be involved in iron or copper homeostasis (By similarity).</text>
</comment>
<comment type="subcellular location">
    <subcellularLocation>
        <location evidence="1">Membrane</location>
        <topology evidence="1">Multi-pass membrane protein</topology>
    </subcellularLocation>
</comment>
<comment type="similarity">
    <text evidence="5">Belongs to the ferric reductase (FRE) family. AIM14 subfamily.</text>
</comment>
<organism>
    <name type="scientific">Debaryomyces hansenii (strain ATCC 36239 / CBS 767 / BCRC 21394 / JCM 1990 / NBRC 0083 / IGC 2968)</name>
    <name type="common">Yeast</name>
    <name type="synonym">Torulaspora hansenii</name>
    <dbReference type="NCBI Taxonomy" id="284592"/>
    <lineage>
        <taxon>Eukaryota</taxon>
        <taxon>Fungi</taxon>
        <taxon>Dikarya</taxon>
        <taxon>Ascomycota</taxon>
        <taxon>Saccharomycotina</taxon>
        <taxon>Pichiomycetes</taxon>
        <taxon>Debaryomycetaceae</taxon>
        <taxon>Debaryomyces</taxon>
    </lineage>
</organism>
<sequence length="512" mass="58691">MNELESFSPRHEGHHHAANIKYGYIVLGFSVVHIIGILICKSVFKLRWTTSTKGIDFVKSPLFISIIAWTLILIGLGVFHVQLPENYVTSIKRFGRMSYALLPFDIFLVLRPNSIGLRYLELMDLHKWMSRVIIAGAIIHGVGYFIKWILEGSLFTKSVRLWNFLGIVVFMLNLILIIISLRYFRRRIYQYFYVVHNITVWLFVGLICLHARPGVGKYAIACASLLGLQIFERYAKSHSISDLKVISYEGSNLIVVRIQRDSKIADWPSGSHIRLTYPLTNYRSWIFPTHPYTIASLESDEMLDLIISKSNRFILHPQMPYSWTGPFTSFSKELLQTIDNVDIICGGSGISFALPVFRNLKQKASHVKLIWCVRSNNDLHVLRTLNFNEEIIIHITGNLQDSTSNTIFDEEDYGLLDYDNNENFELESLPSSETPSRTVNDDSLSQDTRPKKESKFIIVQGRPDFGNTFESLVQVNSSNKWIIACGPRSLVNSAQEWASENKVNFVSEIYEM</sequence>